<proteinExistence type="inferred from homology"/>
<sequence>MSANQDYIVADIGLADFGRKEIAIAETEMPGLMACREEFGASKPLKGARITGSLHMTIQTAVLIETLVALGAEVRWASCNIFSTQDHAAAAIAASGVPVFAVKGETLEEYWTYTDKIFQWADGGVSNMILDDGGDATMYILLGARAEAGENILINPGSEEEEILFAQIKKRLAATPGWFTKQRDAIKGVTEETTTGVNRLYQLQAKGLLPFPAINVNDSVTKSKFDNKYGCKESLVDGIRRGTDVMMAGKVAVVCGYGDVGKGSAASLSGAGARVKVTEVDPICALQAAMDGYEVVQLEDVVSSADIFITTTGNKDVIRIEHMRAMKDMAIVGNIGHFDNEIQVSALRNLKWTNVKPQVDLIEFPKGNRIILLSEGRLLNLGNATGHPSFVMSASFSNQVLAQIELFTKGENYKNEVYVLPKQLDEKVARLHLAKLGAKLTELSEEQAAYIGVKAQGPFKAEHYRY</sequence>
<name>SAHH_SINMW</name>
<accession>A6UEJ1</accession>
<evidence type="ECO:0000255" key="1">
    <source>
        <dbReference type="HAMAP-Rule" id="MF_00563"/>
    </source>
</evidence>
<reference key="1">
    <citation type="submission" date="2007-06" db="EMBL/GenBank/DDBJ databases">
        <title>Complete sequence of Sinorhizobium medicae WSM419 chromosome.</title>
        <authorList>
            <consortium name="US DOE Joint Genome Institute"/>
            <person name="Copeland A."/>
            <person name="Lucas S."/>
            <person name="Lapidus A."/>
            <person name="Barry K."/>
            <person name="Glavina del Rio T."/>
            <person name="Dalin E."/>
            <person name="Tice H."/>
            <person name="Pitluck S."/>
            <person name="Chain P."/>
            <person name="Malfatti S."/>
            <person name="Shin M."/>
            <person name="Vergez L."/>
            <person name="Schmutz J."/>
            <person name="Larimer F."/>
            <person name="Land M."/>
            <person name="Hauser L."/>
            <person name="Kyrpides N."/>
            <person name="Mikhailova N."/>
            <person name="Reeve W.G."/>
            <person name="Richardson P."/>
        </authorList>
    </citation>
    <scope>NUCLEOTIDE SEQUENCE [LARGE SCALE GENOMIC DNA]</scope>
    <source>
        <strain>WSM419</strain>
    </source>
</reference>
<protein>
    <recommendedName>
        <fullName evidence="1">Adenosylhomocysteinase</fullName>
        <ecNumber evidence="1">3.13.2.1</ecNumber>
    </recommendedName>
    <alternativeName>
        <fullName evidence="1">S-adenosyl-L-homocysteine hydrolase</fullName>
        <shortName evidence="1">AdoHcyase</shortName>
    </alternativeName>
</protein>
<gene>
    <name evidence="1" type="primary">ahcY</name>
    <name type="ordered locus">Smed_3247</name>
</gene>
<dbReference type="EC" id="3.13.2.1" evidence="1"/>
<dbReference type="EMBL" id="CP000738">
    <property type="protein sequence ID" value="ABR62071.1"/>
    <property type="molecule type" value="Genomic_DNA"/>
</dbReference>
<dbReference type="RefSeq" id="WP_012067452.1">
    <property type="nucleotide sequence ID" value="NC_009636.1"/>
</dbReference>
<dbReference type="RefSeq" id="YP_001328906.1">
    <property type="nucleotide sequence ID" value="NC_009636.1"/>
</dbReference>
<dbReference type="SMR" id="A6UEJ1"/>
<dbReference type="STRING" id="366394.Smed_3247"/>
<dbReference type="GeneID" id="61610829"/>
<dbReference type="KEGG" id="smd:Smed_3247"/>
<dbReference type="PATRIC" id="fig|366394.8.peg.6486"/>
<dbReference type="eggNOG" id="COG0499">
    <property type="taxonomic scope" value="Bacteria"/>
</dbReference>
<dbReference type="HOGENOM" id="CLU_025194_2_0_5"/>
<dbReference type="OrthoDB" id="9802717at2"/>
<dbReference type="UniPathway" id="UPA00314">
    <property type="reaction ID" value="UER00076"/>
</dbReference>
<dbReference type="Proteomes" id="UP000001108">
    <property type="component" value="Chromosome"/>
</dbReference>
<dbReference type="GO" id="GO:0005829">
    <property type="term" value="C:cytosol"/>
    <property type="evidence" value="ECO:0007669"/>
    <property type="project" value="TreeGrafter"/>
</dbReference>
<dbReference type="GO" id="GO:0004013">
    <property type="term" value="F:adenosylhomocysteinase activity"/>
    <property type="evidence" value="ECO:0007669"/>
    <property type="project" value="UniProtKB-UniRule"/>
</dbReference>
<dbReference type="GO" id="GO:0071269">
    <property type="term" value="P:L-homocysteine biosynthetic process"/>
    <property type="evidence" value="ECO:0007669"/>
    <property type="project" value="UniProtKB-UniRule"/>
</dbReference>
<dbReference type="GO" id="GO:0006730">
    <property type="term" value="P:one-carbon metabolic process"/>
    <property type="evidence" value="ECO:0007669"/>
    <property type="project" value="UniProtKB-KW"/>
</dbReference>
<dbReference type="GO" id="GO:0033353">
    <property type="term" value="P:S-adenosylmethionine cycle"/>
    <property type="evidence" value="ECO:0007669"/>
    <property type="project" value="TreeGrafter"/>
</dbReference>
<dbReference type="CDD" id="cd00401">
    <property type="entry name" value="SAHH"/>
    <property type="match status" value="1"/>
</dbReference>
<dbReference type="FunFam" id="3.40.50.720:FF:000004">
    <property type="entry name" value="Adenosylhomocysteinase"/>
    <property type="match status" value="1"/>
</dbReference>
<dbReference type="Gene3D" id="3.40.50.1480">
    <property type="entry name" value="Adenosylhomocysteinase-like"/>
    <property type="match status" value="1"/>
</dbReference>
<dbReference type="Gene3D" id="3.40.50.720">
    <property type="entry name" value="NAD(P)-binding Rossmann-like Domain"/>
    <property type="match status" value="1"/>
</dbReference>
<dbReference type="HAMAP" id="MF_00563">
    <property type="entry name" value="AdoHcyase"/>
    <property type="match status" value="1"/>
</dbReference>
<dbReference type="InterPro" id="IPR042172">
    <property type="entry name" value="Adenosylhomocyst_ase-like_sf"/>
</dbReference>
<dbReference type="InterPro" id="IPR000043">
    <property type="entry name" value="Adenosylhomocysteinase-like"/>
</dbReference>
<dbReference type="InterPro" id="IPR015878">
    <property type="entry name" value="Ado_hCys_hydrolase_NAD-bd"/>
</dbReference>
<dbReference type="InterPro" id="IPR036291">
    <property type="entry name" value="NAD(P)-bd_dom_sf"/>
</dbReference>
<dbReference type="InterPro" id="IPR020082">
    <property type="entry name" value="S-Ado-L-homoCys_hydrolase_CS"/>
</dbReference>
<dbReference type="NCBIfam" id="TIGR00936">
    <property type="entry name" value="ahcY"/>
    <property type="match status" value="1"/>
</dbReference>
<dbReference type="NCBIfam" id="NF004005">
    <property type="entry name" value="PRK05476.2-3"/>
    <property type="match status" value="1"/>
</dbReference>
<dbReference type="PANTHER" id="PTHR23420">
    <property type="entry name" value="ADENOSYLHOMOCYSTEINASE"/>
    <property type="match status" value="1"/>
</dbReference>
<dbReference type="PANTHER" id="PTHR23420:SF0">
    <property type="entry name" value="ADENOSYLHOMOCYSTEINASE"/>
    <property type="match status" value="1"/>
</dbReference>
<dbReference type="Pfam" id="PF05221">
    <property type="entry name" value="AdoHcyase"/>
    <property type="match status" value="1"/>
</dbReference>
<dbReference type="Pfam" id="PF00670">
    <property type="entry name" value="AdoHcyase_NAD"/>
    <property type="match status" value="1"/>
</dbReference>
<dbReference type="PIRSF" id="PIRSF001109">
    <property type="entry name" value="Ad_hcy_hydrolase"/>
    <property type="match status" value="1"/>
</dbReference>
<dbReference type="SMART" id="SM00996">
    <property type="entry name" value="AdoHcyase"/>
    <property type="match status" value="1"/>
</dbReference>
<dbReference type="SMART" id="SM00997">
    <property type="entry name" value="AdoHcyase_NAD"/>
    <property type="match status" value="1"/>
</dbReference>
<dbReference type="SUPFAM" id="SSF52283">
    <property type="entry name" value="Formate/glycerate dehydrogenase catalytic domain-like"/>
    <property type="match status" value="1"/>
</dbReference>
<dbReference type="SUPFAM" id="SSF51735">
    <property type="entry name" value="NAD(P)-binding Rossmann-fold domains"/>
    <property type="match status" value="1"/>
</dbReference>
<dbReference type="PROSITE" id="PS00738">
    <property type="entry name" value="ADOHCYASE_1"/>
    <property type="match status" value="1"/>
</dbReference>
<dbReference type="PROSITE" id="PS00739">
    <property type="entry name" value="ADOHCYASE_2"/>
    <property type="match status" value="1"/>
</dbReference>
<organism>
    <name type="scientific">Sinorhizobium medicae (strain WSM419)</name>
    <name type="common">Ensifer medicae</name>
    <dbReference type="NCBI Taxonomy" id="366394"/>
    <lineage>
        <taxon>Bacteria</taxon>
        <taxon>Pseudomonadati</taxon>
        <taxon>Pseudomonadota</taxon>
        <taxon>Alphaproteobacteria</taxon>
        <taxon>Hyphomicrobiales</taxon>
        <taxon>Rhizobiaceae</taxon>
        <taxon>Sinorhizobium/Ensifer group</taxon>
        <taxon>Sinorhizobium</taxon>
    </lineage>
</organism>
<comment type="function">
    <text evidence="1">May play a key role in the regulation of the intracellular concentration of adenosylhomocysteine.</text>
</comment>
<comment type="catalytic activity">
    <reaction evidence="1">
        <text>S-adenosyl-L-homocysteine + H2O = L-homocysteine + adenosine</text>
        <dbReference type="Rhea" id="RHEA:21708"/>
        <dbReference type="ChEBI" id="CHEBI:15377"/>
        <dbReference type="ChEBI" id="CHEBI:16335"/>
        <dbReference type="ChEBI" id="CHEBI:57856"/>
        <dbReference type="ChEBI" id="CHEBI:58199"/>
        <dbReference type="EC" id="3.13.2.1"/>
    </reaction>
</comment>
<comment type="cofactor">
    <cofactor evidence="1">
        <name>NAD(+)</name>
        <dbReference type="ChEBI" id="CHEBI:57540"/>
    </cofactor>
    <text evidence="1">Binds 1 NAD(+) per subunit.</text>
</comment>
<comment type="pathway">
    <text evidence="1">Amino-acid biosynthesis; L-homocysteine biosynthesis; L-homocysteine from S-adenosyl-L-homocysteine: step 1/1.</text>
</comment>
<comment type="subcellular location">
    <subcellularLocation>
        <location evidence="1">Cytoplasm</location>
    </subcellularLocation>
</comment>
<comment type="similarity">
    <text evidence="1">Belongs to the adenosylhomocysteinase family.</text>
</comment>
<keyword id="KW-0963">Cytoplasm</keyword>
<keyword id="KW-0378">Hydrolase</keyword>
<keyword id="KW-0520">NAD</keyword>
<keyword id="KW-0554">One-carbon metabolism</keyword>
<feature type="chain" id="PRO_1000196678" description="Adenosylhomocysteinase">
    <location>
        <begin position="1"/>
        <end position="466"/>
    </location>
</feature>
<feature type="binding site" evidence="1">
    <location>
        <position position="57"/>
    </location>
    <ligand>
        <name>substrate</name>
    </ligand>
</feature>
<feature type="binding site" evidence="1">
    <location>
        <position position="132"/>
    </location>
    <ligand>
        <name>substrate</name>
    </ligand>
</feature>
<feature type="binding site" evidence="1">
    <location>
        <position position="192"/>
    </location>
    <ligand>
        <name>substrate</name>
    </ligand>
</feature>
<feature type="binding site" evidence="1">
    <location>
        <begin position="193"/>
        <end position="195"/>
    </location>
    <ligand>
        <name>NAD(+)</name>
        <dbReference type="ChEBI" id="CHEBI:57540"/>
    </ligand>
</feature>
<feature type="binding site" evidence="1">
    <location>
        <position position="222"/>
    </location>
    <ligand>
        <name>substrate</name>
    </ligand>
</feature>
<feature type="binding site" evidence="1">
    <location>
        <position position="226"/>
    </location>
    <ligand>
        <name>substrate</name>
    </ligand>
</feature>
<feature type="binding site" evidence="1">
    <location>
        <position position="227"/>
    </location>
    <ligand>
        <name>NAD(+)</name>
        <dbReference type="ChEBI" id="CHEBI:57540"/>
    </ligand>
</feature>
<feature type="binding site" evidence="1">
    <location>
        <begin position="256"/>
        <end position="261"/>
    </location>
    <ligand>
        <name>NAD(+)</name>
        <dbReference type="ChEBI" id="CHEBI:57540"/>
    </ligand>
</feature>
<feature type="binding site" evidence="1">
    <location>
        <position position="279"/>
    </location>
    <ligand>
        <name>NAD(+)</name>
        <dbReference type="ChEBI" id="CHEBI:57540"/>
    </ligand>
</feature>
<feature type="binding site" evidence="1">
    <location>
        <position position="314"/>
    </location>
    <ligand>
        <name>NAD(+)</name>
        <dbReference type="ChEBI" id="CHEBI:57540"/>
    </ligand>
</feature>
<feature type="binding site" evidence="1">
    <location>
        <begin position="335"/>
        <end position="337"/>
    </location>
    <ligand>
        <name>NAD(+)</name>
        <dbReference type="ChEBI" id="CHEBI:57540"/>
    </ligand>
</feature>
<feature type="binding site" evidence="1">
    <location>
        <position position="380"/>
    </location>
    <ligand>
        <name>NAD(+)</name>
        <dbReference type="ChEBI" id="CHEBI:57540"/>
    </ligand>
</feature>